<organism>
    <name type="scientific">Yersinia pestis</name>
    <dbReference type="NCBI Taxonomy" id="632"/>
    <lineage>
        <taxon>Bacteria</taxon>
        <taxon>Pseudomonadati</taxon>
        <taxon>Pseudomonadota</taxon>
        <taxon>Gammaproteobacteria</taxon>
        <taxon>Enterobacterales</taxon>
        <taxon>Yersiniaceae</taxon>
        <taxon>Yersinia</taxon>
    </lineage>
</organism>
<reference key="1">
    <citation type="journal article" date="2001" name="Nature">
        <title>Genome sequence of Yersinia pestis, the causative agent of plague.</title>
        <authorList>
            <person name="Parkhill J."/>
            <person name="Wren B.W."/>
            <person name="Thomson N.R."/>
            <person name="Titball R.W."/>
            <person name="Holden M.T.G."/>
            <person name="Prentice M.B."/>
            <person name="Sebaihia M."/>
            <person name="James K.D."/>
            <person name="Churcher C.M."/>
            <person name="Mungall K.L."/>
            <person name="Baker S."/>
            <person name="Basham D."/>
            <person name="Bentley S.D."/>
            <person name="Brooks K."/>
            <person name="Cerdeno-Tarraga A.-M."/>
            <person name="Chillingworth T."/>
            <person name="Cronin A."/>
            <person name="Davies R.M."/>
            <person name="Davis P."/>
            <person name="Dougan G."/>
            <person name="Feltwell T."/>
            <person name="Hamlin N."/>
            <person name="Holroyd S."/>
            <person name="Jagels K."/>
            <person name="Karlyshev A.V."/>
            <person name="Leather S."/>
            <person name="Moule S."/>
            <person name="Oyston P.C.F."/>
            <person name="Quail M.A."/>
            <person name="Rutherford K.M."/>
            <person name="Simmonds M."/>
            <person name="Skelton J."/>
            <person name="Stevens K."/>
            <person name="Whitehead S."/>
            <person name="Barrell B.G."/>
        </authorList>
    </citation>
    <scope>NUCLEOTIDE SEQUENCE [LARGE SCALE GENOMIC DNA]</scope>
    <source>
        <strain>CO-92 / Biovar Orientalis</strain>
    </source>
</reference>
<reference key="2">
    <citation type="journal article" date="2002" name="J. Bacteriol.">
        <title>Genome sequence of Yersinia pestis KIM.</title>
        <authorList>
            <person name="Deng W."/>
            <person name="Burland V."/>
            <person name="Plunkett G. III"/>
            <person name="Boutin A."/>
            <person name="Mayhew G.F."/>
            <person name="Liss P."/>
            <person name="Perna N.T."/>
            <person name="Rose D.J."/>
            <person name="Mau B."/>
            <person name="Zhou S."/>
            <person name="Schwartz D.C."/>
            <person name="Fetherston J.D."/>
            <person name="Lindler L.E."/>
            <person name="Brubaker R.R."/>
            <person name="Plano G.V."/>
            <person name="Straley S.C."/>
            <person name="McDonough K.A."/>
            <person name="Nilles M.L."/>
            <person name="Matson J.S."/>
            <person name="Blattner F.R."/>
            <person name="Perry R.D."/>
        </authorList>
    </citation>
    <scope>NUCLEOTIDE SEQUENCE [LARGE SCALE GENOMIC DNA]</scope>
    <source>
        <strain>KIM10+ / Biovar Mediaevalis</strain>
    </source>
</reference>
<reference key="3">
    <citation type="journal article" date="2004" name="DNA Res.">
        <title>Complete genome sequence of Yersinia pestis strain 91001, an isolate avirulent to humans.</title>
        <authorList>
            <person name="Song Y."/>
            <person name="Tong Z."/>
            <person name="Wang J."/>
            <person name="Wang L."/>
            <person name="Guo Z."/>
            <person name="Han Y."/>
            <person name="Zhang J."/>
            <person name="Pei D."/>
            <person name="Zhou D."/>
            <person name="Qin H."/>
            <person name="Pang X."/>
            <person name="Han Y."/>
            <person name="Zhai J."/>
            <person name="Li M."/>
            <person name="Cui B."/>
            <person name="Qi Z."/>
            <person name="Jin L."/>
            <person name="Dai R."/>
            <person name="Chen F."/>
            <person name="Li S."/>
            <person name="Ye C."/>
            <person name="Du Z."/>
            <person name="Lin W."/>
            <person name="Wang J."/>
            <person name="Yu J."/>
            <person name="Yang H."/>
            <person name="Wang J."/>
            <person name="Huang P."/>
            <person name="Yang R."/>
        </authorList>
    </citation>
    <scope>NUCLEOTIDE SEQUENCE [LARGE SCALE GENOMIC DNA]</scope>
    <source>
        <strain>91001 / Biovar Mediaevalis</strain>
    </source>
</reference>
<proteinExistence type="inferred from homology"/>
<sequence length="687" mass="80015">MGQEKLYTEKELSWLSFNERVLQEAADKSNPLIERMRFLGIYSNNLDEFYKVRFADLKRRILINEEQGSAVTSRHLLKKIQSKVVKADQEFDGLYNDLLLEMARNQIFLVNERQISENQQTWLKQYFKQHLRQHITPILINHDTNLVQFLKDDYTYLAVEIIRGQDIAYALLEIPSDKIPRFVNLPPEAPRRRKPMILLDNILRFCLDEIFKGFFDYDALNAYSMKMTRDAEYDLVTEMESSLLELMSSSLKQRLTAEPVRFVYQRDMPDEMVELLRNKLGISNDDSVIAGGRYHNFKDFINFPNVGKSNLVNRPMPRLRHVWFDKFRNGFDAIREQDVLLYYPYHTFEHVLELLRQASFDPSVLAIKINIYRVAKDSRIIDSMIHAAHNGKKVTVVVELQARFDEEANIHWAKSLTAAGVHVIFSAPGLKIHAKLFLISRLENDEIVRYAHIGTGNFNEKTARIYTDYSLLTADARITNEVRRVFNFIENPYRPVTFDNLMVSPQNSRLILYQLIDQEIIHAQAGESAGITLKINNLVDKGLVDRLYSASSAGVKIRLLVRGMCSLIPNMPGISDNIQVTSIVDRFLEHDRVYVFENKGDKLVYLSSADWMTRNIDYRIEVAVSLLDPKLKQRVLDILEILFNDTVKARYIDKELSNRYVPRGNRRKVRAQIAIYDYLKALEQPEQ</sequence>
<name>PPK1_YERPE</name>
<protein>
    <recommendedName>
        <fullName evidence="1">Polyphosphate kinase</fullName>
        <ecNumber evidence="1">2.7.4.1</ecNumber>
    </recommendedName>
    <alternativeName>
        <fullName evidence="1">ATP-polyphosphate phosphotransferase</fullName>
    </alternativeName>
    <alternativeName>
        <fullName evidence="1">Polyphosphoric acid kinase</fullName>
    </alternativeName>
</protein>
<gene>
    <name evidence="1" type="primary">ppk</name>
    <name type="ordered locus">YPO2836</name>
    <name type="ordered locus">y1398</name>
    <name type="ordered locus">YP_2703</name>
</gene>
<dbReference type="EC" id="2.7.4.1" evidence="1"/>
<dbReference type="EMBL" id="AL590842">
    <property type="protein sequence ID" value="CAL21448.1"/>
    <property type="molecule type" value="Genomic_DNA"/>
</dbReference>
<dbReference type="EMBL" id="AE009952">
    <property type="protein sequence ID" value="AAM84970.1"/>
    <property type="status" value="ALT_INIT"/>
    <property type="molecule type" value="Genomic_DNA"/>
</dbReference>
<dbReference type="EMBL" id="AE017042">
    <property type="protein sequence ID" value="AAS62892.1"/>
    <property type="status" value="ALT_INIT"/>
    <property type="molecule type" value="Genomic_DNA"/>
</dbReference>
<dbReference type="PIR" id="AE0345">
    <property type="entry name" value="AE0345"/>
</dbReference>
<dbReference type="RefSeq" id="YP_002347774.1">
    <property type="nucleotide sequence ID" value="NC_003143.1"/>
</dbReference>
<dbReference type="SMR" id="Q8ZCX2"/>
<dbReference type="STRING" id="214092.YPO2836"/>
<dbReference type="PaxDb" id="214092-YPO2836"/>
<dbReference type="EnsemblBacteria" id="AAS62892">
    <property type="protein sequence ID" value="AAS62892"/>
    <property type="gene ID" value="YP_2703"/>
</dbReference>
<dbReference type="KEGG" id="ype:YPO2836"/>
<dbReference type="KEGG" id="ypk:y1398"/>
<dbReference type="KEGG" id="ypm:YP_2703"/>
<dbReference type="PATRIC" id="fig|214092.21.peg.3280"/>
<dbReference type="eggNOG" id="COG0855">
    <property type="taxonomic scope" value="Bacteria"/>
</dbReference>
<dbReference type="HOGENOM" id="CLU_009678_6_1_6"/>
<dbReference type="OMA" id="MTLYRVG"/>
<dbReference type="OrthoDB" id="9761456at2"/>
<dbReference type="Proteomes" id="UP000000815">
    <property type="component" value="Chromosome"/>
</dbReference>
<dbReference type="Proteomes" id="UP000001019">
    <property type="component" value="Chromosome"/>
</dbReference>
<dbReference type="Proteomes" id="UP000002490">
    <property type="component" value="Chromosome"/>
</dbReference>
<dbReference type="GO" id="GO:0016020">
    <property type="term" value="C:membrane"/>
    <property type="evidence" value="ECO:0000318"/>
    <property type="project" value="GO_Central"/>
</dbReference>
<dbReference type="GO" id="GO:0009358">
    <property type="term" value="C:polyphosphate kinase complex"/>
    <property type="evidence" value="ECO:0007669"/>
    <property type="project" value="InterPro"/>
</dbReference>
<dbReference type="GO" id="GO:0005524">
    <property type="term" value="F:ATP binding"/>
    <property type="evidence" value="ECO:0007669"/>
    <property type="project" value="UniProtKB-KW"/>
</dbReference>
<dbReference type="GO" id="GO:0046872">
    <property type="term" value="F:metal ion binding"/>
    <property type="evidence" value="ECO:0007669"/>
    <property type="project" value="UniProtKB-KW"/>
</dbReference>
<dbReference type="GO" id="GO:0008976">
    <property type="term" value="F:polyphosphate kinase activity"/>
    <property type="evidence" value="ECO:0000318"/>
    <property type="project" value="GO_Central"/>
</dbReference>
<dbReference type="GO" id="GO:0006799">
    <property type="term" value="P:polyphosphate biosynthetic process"/>
    <property type="evidence" value="ECO:0000318"/>
    <property type="project" value="GO_Central"/>
</dbReference>
<dbReference type="CDD" id="cd09167">
    <property type="entry name" value="PLDc_EcPPK1_C2_like"/>
    <property type="match status" value="1"/>
</dbReference>
<dbReference type="FunFam" id="1.20.58.310:FF:000001">
    <property type="entry name" value="Polyphosphate kinase"/>
    <property type="match status" value="1"/>
</dbReference>
<dbReference type="FunFam" id="3.30.1840.10:FF:000001">
    <property type="entry name" value="Polyphosphate kinase"/>
    <property type="match status" value="1"/>
</dbReference>
<dbReference type="FunFam" id="3.30.870.10:FF:000001">
    <property type="entry name" value="Polyphosphate kinase"/>
    <property type="match status" value="1"/>
</dbReference>
<dbReference type="FunFam" id="3.30.870.10:FF:000007">
    <property type="entry name" value="Polyphosphate kinase"/>
    <property type="match status" value="1"/>
</dbReference>
<dbReference type="Gene3D" id="3.30.870.10">
    <property type="entry name" value="Endonuclease Chain A"/>
    <property type="match status" value="2"/>
</dbReference>
<dbReference type="Gene3D" id="3.30.1840.10">
    <property type="entry name" value="Polyphosphate kinase middle domain"/>
    <property type="match status" value="1"/>
</dbReference>
<dbReference type="Gene3D" id="1.20.58.310">
    <property type="entry name" value="Polyphosphate kinase N-terminal domain"/>
    <property type="match status" value="1"/>
</dbReference>
<dbReference type="HAMAP" id="MF_00347">
    <property type="entry name" value="Polyphosphate_kinase"/>
    <property type="match status" value="1"/>
</dbReference>
<dbReference type="InterPro" id="IPR001736">
    <property type="entry name" value="PLipase_D/transphosphatidylase"/>
</dbReference>
<dbReference type="InterPro" id="IPR003414">
    <property type="entry name" value="PP_kinase"/>
</dbReference>
<dbReference type="InterPro" id="IPR041108">
    <property type="entry name" value="PP_kinase_C_1"/>
</dbReference>
<dbReference type="InterPro" id="IPR024953">
    <property type="entry name" value="PP_kinase_middle"/>
</dbReference>
<dbReference type="InterPro" id="IPR036830">
    <property type="entry name" value="PP_kinase_middle_dom_sf"/>
</dbReference>
<dbReference type="InterPro" id="IPR025200">
    <property type="entry name" value="PPK_C_dom2"/>
</dbReference>
<dbReference type="InterPro" id="IPR025198">
    <property type="entry name" value="PPK_N_dom"/>
</dbReference>
<dbReference type="InterPro" id="IPR036832">
    <property type="entry name" value="PPK_N_dom_sf"/>
</dbReference>
<dbReference type="NCBIfam" id="TIGR03705">
    <property type="entry name" value="poly_P_kin"/>
    <property type="match status" value="1"/>
</dbReference>
<dbReference type="NCBIfam" id="NF003917">
    <property type="entry name" value="PRK05443.1-1"/>
    <property type="match status" value="1"/>
</dbReference>
<dbReference type="PANTHER" id="PTHR30218">
    <property type="entry name" value="POLYPHOSPHATE KINASE"/>
    <property type="match status" value="1"/>
</dbReference>
<dbReference type="PANTHER" id="PTHR30218:SF0">
    <property type="entry name" value="POLYPHOSPHATE KINASE"/>
    <property type="match status" value="1"/>
</dbReference>
<dbReference type="Pfam" id="PF02503">
    <property type="entry name" value="PP_kinase"/>
    <property type="match status" value="1"/>
</dbReference>
<dbReference type="Pfam" id="PF13090">
    <property type="entry name" value="PP_kinase_C"/>
    <property type="match status" value="1"/>
</dbReference>
<dbReference type="Pfam" id="PF17941">
    <property type="entry name" value="PP_kinase_C_1"/>
    <property type="match status" value="1"/>
</dbReference>
<dbReference type="Pfam" id="PF13089">
    <property type="entry name" value="PP_kinase_N"/>
    <property type="match status" value="1"/>
</dbReference>
<dbReference type="PIRSF" id="PIRSF015589">
    <property type="entry name" value="PP_kinase"/>
    <property type="match status" value="1"/>
</dbReference>
<dbReference type="SUPFAM" id="SSF56024">
    <property type="entry name" value="Phospholipase D/nuclease"/>
    <property type="match status" value="2"/>
</dbReference>
<dbReference type="SUPFAM" id="SSF143724">
    <property type="entry name" value="PHP14-like"/>
    <property type="match status" value="1"/>
</dbReference>
<dbReference type="SUPFAM" id="SSF140356">
    <property type="entry name" value="PPK N-terminal domain-like"/>
    <property type="match status" value="1"/>
</dbReference>
<dbReference type="PROSITE" id="PS50035">
    <property type="entry name" value="PLD"/>
    <property type="match status" value="1"/>
</dbReference>
<accession>Q8ZCX2</accession>
<accession>Q0WD64</accession>
<feature type="chain" id="PRO_0000128672" description="Polyphosphate kinase">
    <location>
        <begin position="1"/>
        <end position="687"/>
    </location>
</feature>
<feature type="domain" description="PLD phosphodiesterase" evidence="1">
    <location>
        <begin position="585"/>
        <end position="615"/>
    </location>
</feature>
<feature type="active site" description="Phosphohistidine intermediate" evidence="1">
    <location>
        <position position="433"/>
    </location>
</feature>
<feature type="binding site" evidence="1">
    <location>
        <position position="45"/>
    </location>
    <ligand>
        <name>ATP</name>
        <dbReference type="ChEBI" id="CHEBI:30616"/>
    </ligand>
</feature>
<feature type="binding site" evidence="1">
    <location>
        <position position="373"/>
    </location>
    <ligand>
        <name>Mg(2+)</name>
        <dbReference type="ChEBI" id="CHEBI:18420"/>
    </ligand>
</feature>
<feature type="binding site" evidence="1">
    <location>
        <position position="403"/>
    </location>
    <ligand>
        <name>Mg(2+)</name>
        <dbReference type="ChEBI" id="CHEBI:18420"/>
    </ligand>
</feature>
<feature type="binding site" evidence="1">
    <location>
        <position position="466"/>
    </location>
    <ligand>
        <name>ATP</name>
        <dbReference type="ChEBI" id="CHEBI:30616"/>
    </ligand>
</feature>
<feature type="binding site" evidence="1">
    <location>
        <position position="562"/>
    </location>
    <ligand>
        <name>ATP</name>
        <dbReference type="ChEBI" id="CHEBI:30616"/>
    </ligand>
</feature>
<feature type="binding site" evidence="1">
    <location>
        <position position="590"/>
    </location>
    <ligand>
        <name>ATP</name>
        <dbReference type="ChEBI" id="CHEBI:30616"/>
    </ligand>
</feature>
<comment type="function">
    <text evidence="1">Catalyzes the reversible transfer of the terminal phosphate of ATP to form a long-chain polyphosphate (polyP).</text>
</comment>
<comment type="catalytic activity">
    <reaction evidence="1">
        <text>[phosphate](n) + ATP = [phosphate](n+1) + ADP</text>
        <dbReference type="Rhea" id="RHEA:19573"/>
        <dbReference type="Rhea" id="RHEA-COMP:9859"/>
        <dbReference type="Rhea" id="RHEA-COMP:14280"/>
        <dbReference type="ChEBI" id="CHEBI:16838"/>
        <dbReference type="ChEBI" id="CHEBI:30616"/>
        <dbReference type="ChEBI" id="CHEBI:456216"/>
        <dbReference type="EC" id="2.7.4.1"/>
    </reaction>
</comment>
<comment type="cofactor">
    <cofactor evidence="1">
        <name>Mg(2+)</name>
        <dbReference type="ChEBI" id="CHEBI:18420"/>
    </cofactor>
</comment>
<comment type="PTM">
    <text evidence="1">An intermediate of this reaction is the autophosphorylated ppk in which a phosphate is covalently linked to a histidine residue through a N-P bond.</text>
</comment>
<comment type="similarity">
    <text evidence="1">Belongs to the polyphosphate kinase 1 (PPK1) family.</text>
</comment>
<comment type="sequence caution" evidence="2">
    <conflict type="erroneous initiation">
        <sequence resource="EMBL-CDS" id="AAM84970"/>
    </conflict>
</comment>
<comment type="sequence caution" evidence="2">
    <conflict type="erroneous initiation">
        <sequence resource="EMBL-CDS" id="AAS62892"/>
    </conflict>
</comment>
<keyword id="KW-0067">ATP-binding</keyword>
<keyword id="KW-0418">Kinase</keyword>
<keyword id="KW-0460">Magnesium</keyword>
<keyword id="KW-0479">Metal-binding</keyword>
<keyword id="KW-0547">Nucleotide-binding</keyword>
<keyword id="KW-0597">Phosphoprotein</keyword>
<keyword id="KW-1185">Reference proteome</keyword>
<keyword id="KW-0808">Transferase</keyword>
<evidence type="ECO:0000255" key="1">
    <source>
        <dbReference type="HAMAP-Rule" id="MF_00347"/>
    </source>
</evidence>
<evidence type="ECO:0000305" key="2"/>